<name>GSPJ_ECOLI</name>
<reference key="1">
    <citation type="journal article" date="1997" name="Science">
        <title>The complete genome sequence of Escherichia coli K-12.</title>
        <authorList>
            <person name="Blattner F.R."/>
            <person name="Plunkett G. III"/>
            <person name="Bloch C.A."/>
            <person name="Perna N.T."/>
            <person name="Burland V."/>
            <person name="Riley M."/>
            <person name="Collado-Vides J."/>
            <person name="Glasner J.D."/>
            <person name="Rode C.K."/>
            <person name="Mayhew G.F."/>
            <person name="Gregor J."/>
            <person name="Davis N.W."/>
            <person name="Kirkpatrick H.A."/>
            <person name="Goeden M.A."/>
            <person name="Rose D.J."/>
            <person name="Mau B."/>
            <person name="Shao Y."/>
        </authorList>
    </citation>
    <scope>NUCLEOTIDE SEQUENCE [LARGE SCALE GENOMIC DNA]</scope>
    <source>
        <strain>K12 / MG1655 / ATCC 47076</strain>
    </source>
</reference>
<reference key="2">
    <citation type="journal article" date="2006" name="Mol. Syst. Biol.">
        <title>Highly accurate genome sequences of Escherichia coli K-12 strains MG1655 and W3110.</title>
        <authorList>
            <person name="Hayashi K."/>
            <person name="Morooka N."/>
            <person name="Yamamoto Y."/>
            <person name="Fujita K."/>
            <person name="Isono K."/>
            <person name="Choi S."/>
            <person name="Ohtsubo E."/>
            <person name="Baba T."/>
            <person name="Wanner B.L."/>
            <person name="Mori H."/>
            <person name="Horiuchi T."/>
        </authorList>
    </citation>
    <scope>NUCLEOTIDE SEQUENCE [LARGE SCALE GENOMIC DNA]</scope>
    <source>
        <strain>K12 / W3110 / ATCC 27325 / DSM 5911</strain>
    </source>
</reference>
<reference key="3">
    <citation type="journal article" date="1996" name="J. Bacteriol.">
        <title>The cryptic general secretory pathway (gsp) operon of Escherichia coli K-12 encodes functional proteins.</title>
        <authorList>
            <person name="Francetic O."/>
            <person name="Pugsley A.P."/>
        </authorList>
    </citation>
    <scope>LACK OF EXPRESSION</scope>
    <source>
        <strain>K12 / MC4100 / ATCC 35695 / DSM 6574</strain>
    </source>
</reference>
<reference key="4">
    <citation type="journal article" date="2000" name="EMBO J.">
        <title>Expression of the endogenous type II secretion pathway in Escherichia coli leads to chitinase secretion.</title>
        <authorList>
            <person name="Francetic O."/>
            <person name="Belin D."/>
            <person name="Badaut C."/>
            <person name="Pugsley A.P."/>
        </authorList>
    </citation>
    <scope>LACK OF EXPRESSION</scope>
    <scope>TRANSCRIPTIONAL REGULATION</scope>
    <source>
        <strain>K12 / MC4100 / ATCC 35695 / DSM 6574</strain>
    </source>
</reference>
<dbReference type="EMBL" id="U18997">
    <property type="protein sequence ID" value="AAA58128.1"/>
    <property type="molecule type" value="Genomic_DNA"/>
</dbReference>
<dbReference type="EMBL" id="U00096">
    <property type="protein sequence ID" value="AAC76356.1"/>
    <property type="molecule type" value="Genomic_DNA"/>
</dbReference>
<dbReference type="EMBL" id="AP009048">
    <property type="protein sequence ID" value="BAE77960.1"/>
    <property type="molecule type" value="Genomic_DNA"/>
</dbReference>
<dbReference type="PIR" id="F65126">
    <property type="entry name" value="F65126"/>
</dbReference>
<dbReference type="RefSeq" id="NP_417790.1">
    <property type="nucleotide sequence ID" value="NC_000913.3"/>
</dbReference>
<dbReference type="RefSeq" id="WP_000610634.1">
    <property type="nucleotide sequence ID" value="NZ_STEB01000038.1"/>
</dbReference>
<dbReference type="SMR" id="P45761"/>
<dbReference type="BioGRID" id="4261132">
    <property type="interactions" value="284"/>
</dbReference>
<dbReference type="FunCoup" id="P45761">
    <property type="interactions" value="190"/>
</dbReference>
<dbReference type="IntAct" id="P45761">
    <property type="interactions" value="1"/>
</dbReference>
<dbReference type="STRING" id="511145.b3331"/>
<dbReference type="PaxDb" id="511145-b3331"/>
<dbReference type="DNASU" id="947832"/>
<dbReference type="EnsemblBacteria" id="AAC76356">
    <property type="protein sequence ID" value="AAC76356"/>
    <property type="gene ID" value="b3331"/>
</dbReference>
<dbReference type="GeneID" id="947832"/>
<dbReference type="KEGG" id="ecj:JW3293"/>
<dbReference type="KEGG" id="eco:b3331"/>
<dbReference type="KEGG" id="ecoc:C3026_18095"/>
<dbReference type="PATRIC" id="fig|1411691.4.peg.3400"/>
<dbReference type="EchoBASE" id="EB2730"/>
<dbReference type="eggNOG" id="COG4795">
    <property type="taxonomic scope" value="Bacteria"/>
</dbReference>
<dbReference type="HOGENOM" id="CLU_1394484_0_0_6"/>
<dbReference type="InParanoid" id="P45761"/>
<dbReference type="OMA" id="ESWTSEP"/>
<dbReference type="OrthoDB" id="9794345at2"/>
<dbReference type="PhylomeDB" id="P45761"/>
<dbReference type="BioCyc" id="EcoCyc:G7709-MONOMER"/>
<dbReference type="BioCyc" id="MetaCyc:G7709-MONOMER"/>
<dbReference type="PRO" id="PR:P45761"/>
<dbReference type="Proteomes" id="UP000000625">
    <property type="component" value="Chromosome"/>
</dbReference>
<dbReference type="GO" id="GO:0005886">
    <property type="term" value="C:plasma membrane"/>
    <property type="evidence" value="ECO:0007669"/>
    <property type="project" value="UniProtKB-SubCell"/>
</dbReference>
<dbReference type="GO" id="GO:0015627">
    <property type="term" value="C:type II protein secretion system complex"/>
    <property type="evidence" value="ECO:0007669"/>
    <property type="project" value="InterPro"/>
</dbReference>
<dbReference type="GO" id="GO:0015628">
    <property type="term" value="P:protein secretion by the type II secretion system"/>
    <property type="evidence" value="ECO:0000318"/>
    <property type="project" value="GO_Central"/>
</dbReference>
<dbReference type="Gene3D" id="3.10.610.10">
    <property type="entry name" value="GSPII I/J protein-like"/>
    <property type="match status" value="1"/>
</dbReference>
<dbReference type="InterPro" id="IPR012902">
    <property type="entry name" value="N_methyl_site"/>
</dbReference>
<dbReference type="InterPro" id="IPR045584">
    <property type="entry name" value="Pilin-like"/>
</dbReference>
<dbReference type="InterPro" id="IPR010055">
    <property type="entry name" value="T2SS_protein-GspJ"/>
</dbReference>
<dbReference type="InterPro" id="IPR051621">
    <property type="entry name" value="T2SS_protein_J"/>
</dbReference>
<dbReference type="NCBIfam" id="TIGR02532">
    <property type="entry name" value="IV_pilin_GFxxxE"/>
    <property type="match status" value="1"/>
</dbReference>
<dbReference type="PANTHER" id="PTHR39583:SF2">
    <property type="entry name" value="TYPE II SECRETION SYSTEM PROTEIN J"/>
    <property type="match status" value="1"/>
</dbReference>
<dbReference type="PANTHER" id="PTHR39583">
    <property type="entry name" value="TYPE II SECRETION SYSTEM PROTEIN J-RELATED"/>
    <property type="match status" value="1"/>
</dbReference>
<dbReference type="Pfam" id="PF07963">
    <property type="entry name" value="N_methyl"/>
    <property type="match status" value="1"/>
</dbReference>
<dbReference type="Pfam" id="PF11612">
    <property type="entry name" value="T2SSJ"/>
    <property type="match status" value="1"/>
</dbReference>
<dbReference type="SUPFAM" id="SSF54523">
    <property type="entry name" value="Pili subunits"/>
    <property type="match status" value="1"/>
</dbReference>
<dbReference type="PROSITE" id="PS00409">
    <property type="entry name" value="PROKAR_NTER_METHYL"/>
    <property type="match status" value="1"/>
</dbReference>
<keyword id="KW-0997">Cell inner membrane</keyword>
<keyword id="KW-1003">Cell membrane</keyword>
<keyword id="KW-0472">Membrane</keyword>
<keyword id="KW-0488">Methylation</keyword>
<keyword id="KW-0653">Protein transport</keyword>
<keyword id="KW-1185">Reference proteome</keyword>
<keyword id="KW-0812">Transmembrane</keyword>
<keyword id="KW-1133">Transmembrane helix</keyword>
<keyword id="KW-0813">Transport</keyword>
<organism>
    <name type="scientific">Escherichia coli (strain K12)</name>
    <dbReference type="NCBI Taxonomy" id="83333"/>
    <lineage>
        <taxon>Bacteria</taxon>
        <taxon>Pseudomonadati</taxon>
        <taxon>Pseudomonadota</taxon>
        <taxon>Gammaproteobacteria</taxon>
        <taxon>Enterobacterales</taxon>
        <taxon>Enterobacteriaceae</taxon>
        <taxon>Escherichia</taxon>
    </lineage>
</organism>
<sequence>MINRQQGFTLLEVMAALAIFSMLSVLAFMIFSQASELHQRSQKEIQQFNQLQRTITILDNDLLQLVARRNRSTDKIMVLGEEAIFTTQSRDPLAPLSEAQTLLTVHWYLRNHTLYRAVRTSVDGRKDQPAQAMLEHVESFLLESNSGESQELPLSVTLHLQTQQYGGLQRRFALPEQLAREESPAQTQAGNNNHE</sequence>
<proteinExistence type="evidence at transcript level"/>
<gene>
    <name type="primary">gspJ</name>
    <name type="synonym">yheI</name>
    <name type="ordered locus">b3331</name>
    <name type="ordered locus">JW3293</name>
</gene>
<comment type="function">
    <text evidence="1">Component of the type II secretion system required for the energy-dependent secretion of extracellular factors such as proteases and toxins from the periplasm. Part of the pseudopilus tip complex that is critical for the recognition and binding of secretion substrates.</text>
</comment>
<comment type="subunit">
    <text evidence="1">Type II secretion is composed of four main components: the outer membrane complex, the inner membrane complex, the cytoplasmic secretion ATPase and the periplasm-spanning pseudopilus. Interacts with core component GspG.</text>
</comment>
<comment type="subcellular location">
    <subcellularLocation>
        <location evidence="1">Cell inner membrane</location>
        <topology evidence="2">Single-pass membrane protein</topology>
    </subcellularLocation>
</comment>
<comment type="induction">
    <text evidence="4">Silenced by the DNA-binding protein H-NS under standard growth conditions.</text>
</comment>
<comment type="PTM">
    <text evidence="1">Cleaved by prepilin peptidase.</text>
</comment>
<comment type="PTM">
    <text evidence="1">Methylated by prepilin peptidase at the amino group of the N-terminal phenylalanine once the leader sequence is cleaved by prepilin peptidase.</text>
</comment>
<comment type="miscellaneous">
    <text>Part of a cryptic operon that encodes proteins involved in type II secretion machinery in other organisms, but is not expressed in strain K12.</text>
</comment>
<comment type="similarity">
    <text evidence="5">Belongs to the GSP J family.</text>
</comment>
<protein>
    <recommendedName>
        <fullName>Type II secretion system protein J</fullName>
        <shortName>T2SS protein J</shortName>
    </recommendedName>
    <alternativeName>
        <fullName>Putative general secretion pathway protein J</fullName>
    </alternativeName>
</protein>
<evidence type="ECO:0000250" key="1">
    <source>
        <dbReference type="UniProtKB" id="Q00517"/>
    </source>
</evidence>
<evidence type="ECO:0000255" key="2"/>
<evidence type="ECO:0000255" key="3">
    <source>
        <dbReference type="PROSITE-ProRule" id="PRU01070"/>
    </source>
</evidence>
<evidence type="ECO:0000269" key="4">
    <source>
    </source>
</evidence>
<evidence type="ECO:0000305" key="5"/>
<accession>P45761</accession>
<accession>Q2M6Z6</accession>
<feature type="propeptide" id="PRO_0000024248" description="Leader sequence" evidence="3">
    <location>
        <begin position="1"/>
        <end position="7"/>
    </location>
</feature>
<feature type="chain" id="PRO_0000024249" description="Type II secretion system protein J">
    <location>
        <begin position="8"/>
        <end position="195"/>
    </location>
</feature>
<feature type="transmembrane region" description="Helical" evidence="2">
    <location>
        <begin position="8"/>
        <end position="29"/>
    </location>
</feature>
<feature type="modified residue" description="N-methylphenylalanine" evidence="3">
    <location>
        <position position="8"/>
    </location>
</feature>